<organism>
    <name type="scientific">Magnetococcus marinus (strain ATCC BAA-1437 / JCM 17883 / MC-1)</name>
    <dbReference type="NCBI Taxonomy" id="156889"/>
    <lineage>
        <taxon>Bacteria</taxon>
        <taxon>Pseudomonadati</taxon>
        <taxon>Pseudomonadota</taxon>
        <taxon>Alphaproteobacteria</taxon>
        <taxon>Magnetococcales</taxon>
        <taxon>Magnetococcaceae</taxon>
        <taxon>Magnetococcus</taxon>
    </lineage>
</organism>
<feature type="chain" id="PRO_0000325359" description="3-phosphoshikimate 1-carboxyvinyltransferase">
    <location>
        <begin position="1"/>
        <end position="445"/>
    </location>
</feature>
<feature type="region of interest" description="Disordered" evidence="2">
    <location>
        <begin position="1"/>
        <end position="24"/>
    </location>
</feature>
<feature type="compositionally biased region" description="Polar residues" evidence="2">
    <location>
        <begin position="1"/>
        <end position="20"/>
    </location>
</feature>
<feature type="active site" description="Proton acceptor" evidence="1">
    <location>
        <position position="322"/>
    </location>
</feature>
<feature type="binding site" evidence="1">
    <location>
        <position position="28"/>
    </location>
    <ligand>
        <name>3-phosphoshikimate</name>
        <dbReference type="ChEBI" id="CHEBI:145989"/>
    </ligand>
</feature>
<feature type="binding site" evidence="1">
    <location>
        <position position="28"/>
    </location>
    <ligand>
        <name>phosphoenolpyruvate</name>
        <dbReference type="ChEBI" id="CHEBI:58702"/>
    </ligand>
</feature>
<feature type="binding site" evidence="1">
    <location>
        <position position="29"/>
    </location>
    <ligand>
        <name>3-phosphoshikimate</name>
        <dbReference type="ChEBI" id="CHEBI:145989"/>
    </ligand>
</feature>
<feature type="binding site" evidence="1">
    <location>
        <position position="33"/>
    </location>
    <ligand>
        <name>3-phosphoshikimate</name>
        <dbReference type="ChEBI" id="CHEBI:145989"/>
    </ligand>
</feature>
<feature type="binding site" evidence="1">
    <location>
        <position position="101"/>
    </location>
    <ligand>
        <name>phosphoenolpyruvate</name>
        <dbReference type="ChEBI" id="CHEBI:58702"/>
    </ligand>
</feature>
<feature type="binding site" evidence="1">
    <location>
        <position position="129"/>
    </location>
    <ligand>
        <name>phosphoenolpyruvate</name>
        <dbReference type="ChEBI" id="CHEBI:58702"/>
    </ligand>
</feature>
<feature type="binding site" evidence="1">
    <location>
        <position position="174"/>
    </location>
    <ligand>
        <name>3-phosphoshikimate</name>
        <dbReference type="ChEBI" id="CHEBI:145989"/>
    </ligand>
</feature>
<feature type="binding site" evidence="1">
    <location>
        <position position="176"/>
    </location>
    <ligand>
        <name>3-phosphoshikimate</name>
        <dbReference type="ChEBI" id="CHEBI:145989"/>
    </ligand>
</feature>
<feature type="binding site" evidence="1">
    <location>
        <position position="176"/>
    </location>
    <ligand>
        <name>phosphoenolpyruvate</name>
        <dbReference type="ChEBI" id="CHEBI:58702"/>
    </ligand>
</feature>
<feature type="binding site" evidence="1">
    <location>
        <position position="322"/>
    </location>
    <ligand>
        <name>3-phosphoshikimate</name>
        <dbReference type="ChEBI" id="CHEBI:145989"/>
    </ligand>
</feature>
<feature type="binding site" evidence="1">
    <location>
        <position position="349"/>
    </location>
    <ligand>
        <name>3-phosphoshikimate</name>
        <dbReference type="ChEBI" id="CHEBI:145989"/>
    </ligand>
</feature>
<feature type="binding site" evidence="1">
    <location>
        <position position="353"/>
    </location>
    <ligand>
        <name>phosphoenolpyruvate</name>
        <dbReference type="ChEBI" id="CHEBI:58702"/>
    </ligand>
</feature>
<feature type="binding site" evidence="1">
    <location>
        <position position="397"/>
    </location>
    <ligand>
        <name>phosphoenolpyruvate</name>
        <dbReference type="ChEBI" id="CHEBI:58702"/>
    </ligand>
</feature>
<keyword id="KW-0028">Amino-acid biosynthesis</keyword>
<keyword id="KW-0057">Aromatic amino acid biosynthesis</keyword>
<keyword id="KW-0963">Cytoplasm</keyword>
<keyword id="KW-1185">Reference proteome</keyword>
<keyword id="KW-0808">Transferase</keyword>
<dbReference type="EC" id="2.5.1.19" evidence="1"/>
<dbReference type="EMBL" id="CP000471">
    <property type="protein sequence ID" value="ABK42701.1"/>
    <property type="molecule type" value="Genomic_DNA"/>
</dbReference>
<dbReference type="RefSeq" id="WP_011711874.1">
    <property type="nucleotide sequence ID" value="NC_008576.1"/>
</dbReference>
<dbReference type="SMR" id="A0L408"/>
<dbReference type="STRING" id="156889.Mmc1_0174"/>
<dbReference type="KEGG" id="mgm:Mmc1_0174"/>
<dbReference type="eggNOG" id="COG0128">
    <property type="taxonomic scope" value="Bacteria"/>
</dbReference>
<dbReference type="HOGENOM" id="CLU_024321_0_1_5"/>
<dbReference type="OrthoDB" id="9809920at2"/>
<dbReference type="UniPathway" id="UPA00053">
    <property type="reaction ID" value="UER00089"/>
</dbReference>
<dbReference type="Proteomes" id="UP000002586">
    <property type="component" value="Chromosome"/>
</dbReference>
<dbReference type="GO" id="GO:0005737">
    <property type="term" value="C:cytoplasm"/>
    <property type="evidence" value="ECO:0007669"/>
    <property type="project" value="UniProtKB-SubCell"/>
</dbReference>
<dbReference type="GO" id="GO:0003866">
    <property type="term" value="F:3-phosphoshikimate 1-carboxyvinyltransferase activity"/>
    <property type="evidence" value="ECO:0007669"/>
    <property type="project" value="UniProtKB-UniRule"/>
</dbReference>
<dbReference type="GO" id="GO:0008652">
    <property type="term" value="P:amino acid biosynthetic process"/>
    <property type="evidence" value="ECO:0007669"/>
    <property type="project" value="UniProtKB-KW"/>
</dbReference>
<dbReference type="GO" id="GO:0009073">
    <property type="term" value="P:aromatic amino acid family biosynthetic process"/>
    <property type="evidence" value="ECO:0007669"/>
    <property type="project" value="UniProtKB-KW"/>
</dbReference>
<dbReference type="GO" id="GO:0009423">
    <property type="term" value="P:chorismate biosynthetic process"/>
    <property type="evidence" value="ECO:0007669"/>
    <property type="project" value="UniProtKB-UniRule"/>
</dbReference>
<dbReference type="CDD" id="cd01556">
    <property type="entry name" value="EPSP_synthase"/>
    <property type="match status" value="1"/>
</dbReference>
<dbReference type="FunFam" id="3.65.10.10:FF:000005">
    <property type="entry name" value="3-phosphoshikimate 1-carboxyvinyltransferase"/>
    <property type="match status" value="1"/>
</dbReference>
<dbReference type="FunFam" id="3.65.10.10:FF:000006">
    <property type="entry name" value="3-phosphoshikimate 1-carboxyvinyltransferase"/>
    <property type="match status" value="1"/>
</dbReference>
<dbReference type="Gene3D" id="3.65.10.10">
    <property type="entry name" value="Enolpyruvate transferase domain"/>
    <property type="match status" value="2"/>
</dbReference>
<dbReference type="HAMAP" id="MF_00210">
    <property type="entry name" value="EPSP_synth"/>
    <property type="match status" value="1"/>
</dbReference>
<dbReference type="InterPro" id="IPR001986">
    <property type="entry name" value="Enolpyruvate_Tfrase_dom"/>
</dbReference>
<dbReference type="InterPro" id="IPR036968">
    <property type="entry name" value="Enolpyruvate_Tfrase_sf"/>
</dbReference>
<dbReference type="InterPro" id="IPR006264">
    <property type="entry name" value="EPSP_synthase"/>
</dbReference>
<dbReference type="InterPro" id="IPR023193">
    <property type="entry name" value="EPSP_synthase_CS"/>
</dbReference>
<dbReference type="InterPro" id="IPR013792">
    <property type="entry name" value="RNA3'P_cycl/enolpyr_Trfase_a/b"/>
</dbReference>
<dbReference type="NCBIfam" id="TIGR01356">
    <property type="entry name" value="aroA"/>
    <property type="match status" value="1"/>
</dbReference>
<dbReference type="PANTHER" id="PTHR21090">
    <property type="entry name" value="AROM/DEHYDROQUINATE SYNTHASE"/>
    <property type="match status" value="1"/>
</dbReference>
<dbReference type="PANTHER" id="PTHR21090:SF5">
    <property type="entry name" value="PENTAFUNCTIONAL AROM POLYPEPTIDE"/>
    <property type="match status" value="1"/>
</dbReference>
<dbReference type="Pfam" id="PF00275">
    <property type="entry name" value="EPSP_synthase"/>
    <property type="match status" value="1"/>
</dbReference>
<dbReference type="PIRSF" id="PIRSF000505">
    <property type="entry name" value="EPSPS"/>
    <property type="match status" value="1"/>
</dbReference>
<dbReference type="SUPFAM" id="SSF55205">
    <property type="entry name" value="EPT/RTPC-like"/>
    <property type="match status" value="1"/>
</dbReference>
<dbReference type="PROSITE" id="PS00104">
    <property type="entry name" value="EPSP_SYNTHASE_1"/>
    <property type="match status" value="1"/>
</dbReference>
<dbReference type="PROSITE" id="PS00885">
    <property type="entry name" value="EPSP_SYNTHASE_2"/>
    <property type="match status" value="1"/>
</dbReference>
<sequence>MSSTHPGRTIRSGATQNLSGTIRPAADKSISHRSVIFGALAEGETHVKGMLEGEDVLRTITAFRTMGISIERCNEGEYRIQGQGLDGLKEPDDVLDMGNSGTAMRLLCGLLASQPFHSILTGDHSLRSRPMGRVVQPLTKMGARIRGRDGGRLAPLAIEGTELVPITYNSPIASAQVKSAIILAGLNTAGETTIIEPAVSRDHTERMLIAFGAEVTRDGNQVTIEGWPNLQGQEIEVPADISAAAFPMVAALITPGSDIILENVGMNPTRTGILDLLLAMGGNIQRLNEREVGGEPVADLQVRYSQLQGIEIDPTVVPRAIDEFPVFFVAAALAQGQTLVQGAEELRVKESDRITAMANGLKALGAIIEERPDGALITGNPDGLAGGASVDSFTDHRIAMSLLVAGLRCKESVLVQRCDNINTSFPSFSQLMNSLGFQLEDVSHG</sequence>
<proteinExistence type="inferred from homology"/>
<protein>
    <recommendedName>
        <fullName evidence="1">3-phosphoshikimate 1-carboxyvinyltransferase</fullName>
        <ecNumber evidence="1">2.5.1.19</ecNumber>
    </recommendedName>
    <alternativeName>
        <fullName evidence="1">5-enolpyruvylshikimate-3-phosphate synthase</fullName>
        <shortName evidence="1">EPSP synthase</shortName>
        <shortName evidence="1">EPSPS</shortName>
    </alternativeName>
</protein>
<reference key="1">
    <citation type="journal article" date="2009" name="Appl. Environ. Microbiol.">
        <title>Complete genome sequence of the chemolithoautotrophic marine magnetotactic coccus strain MC-1.</title>
        <authorList>
            <person name="Schubbe S."/>
            <person name="Williams T.J."/>
            <person name="Xie G."/>
            <person name="Kiss H.E."/>
            <person name="Brettin T.S."/>
            <person name="Martinez D."/>
            <person name="Ross C.A."/>
            <person name="Schuler D."/>
            <person name="Cox B.L."/>
            <person name="Nealson K.H."/>
            <person name="Bazylinski D.A."/>
        </authorList>
    </citation>
    <scope>NUCLEOTIDE SEQUENCE [LARGE SCALE GENOMIC DNA]</scope>
    <source>
        <strain>ATCC BAA-1437 / JCM 17883 / MC-1</strain>
    </source>
</reference>
<accession>A0L408</accession>
<name>AROA_MAGMM</name>
<gene>
    <name evidence="1" type="primary">aroA</name>
    <name type="ordered locus">Mmc1_0174</name>
</gene>
<evidence type="ECO:0000255" key="1">
    <source>
        <dbReference type="HAMAP-Rule" id="MF_00210"/>
    </source>
</evidence>
<evidence type="ECO:0000256" key="2">
    <source>
        <dbReference type="SAM" id="MobiDB-lite"/>
    </source>
</evidence>
<comment type="function">
    <text evidence="1">Catalyzes the transfer of the enolpyruvyl moiety of phosphoenolpyruvate (PEP) to the 5-hydroxyl of shikimate-3-phosphate (S3P) to produce enolpyruvyl shikimate-3-phosphate and inorganic phosphate.</text>
</comment>
<comment type="catalytic activity">
    <reaction evidence="1">
        <text>3-phosphoshikimate + phosphoenolpyruvate = 5-O-(1-carboxyvinyl)-3-phosphoshikimate + phosphate</text>
        <dbReference type="Rhea" id="RHEA:21256"/>
        <dbReference type="ChEBI" id="CHEBI:43474"/>
        <dbReference type="ChEBI" id="CHEBI:57701"/>
        <dbReference type="ChEBI" id="CHEBI:58702"/>
        <dbReference type="ChEBI" id="CHEBI:145989"/>
        <dbReference type="EC" id="2.5.1.19"/>
    </reaction>
    <physiologicalReaction direction="left-to-right" evidence="1">
        <dbReference type="Rhea" id="RHEA:21257"/>
    </physiologicalReaction>
</comment>
<comment type="pathway">
    <text evidence="1">Metabolic intermediate biosynthesis; chorismate biosynthesis; chorismate from D-erythrose 4-phosphate and phosphoenolpyruvate: step 6/7.</text>
</comment>
<comment type="subunit">
    <text evidence="1">Monomer.</text>
</comment>
<comment type="subcellular location">
    <subcellularLocation>
        <location evidence="1">Cytoplasm</location>
    </subcellularLocation>
</comment>
<comment type="similarity">
    <text evidence="1">Belongs to the EPSP synthase family.</text>
</comment>